<dbReference type="EMBL" id="CP001344">
    <property type="protein sequence ID" value="ACL46324.1"/>
    <property type="molecule type" value="Genomic_DNA"/>
</dbReference>
<dbReference type="SMR" id="B8HVL2"/>
<dbReference type="STRING" id="395961.Cyan7425_4010"/>
<dbReference type="KEGG" id="cyn:Cyan7425_4010"/>
<dbReference type="eggNOG" id="COG0222">
    <property type="taxonomic scope" value="Bacteria"/>
</dbReference>
<dbReference type="HOGENOM" id="CLU_086499_3_0_3"/>
<dbReference type="OrthoDB" id="9811748at2"/>
<dbReference type="GO" id="GO:0022625">
    <property type="term" value="C:cytosolic large ribosomal subunit"/>
    <property type="evidence" value="ECO:0007669"/>
    <property type="project" value="TreeGrafter"/>
</dbReference>
<dbReference type="GO" id="GO:0003729">
    <property type="term" value="F:mRNA binding"/>
    <property type="evidence" value="ECO:0007669"/>
    <property type="project" value="TreeGrafter"/>
</dbReference>
<dbReference type="GO" id="GO:0003735">
    <property type="term" value="F:structural constituent of ribosome"/>
    <property type="evidence" value="ECO:0007669"/>
    <property type="project" value="InterPro"/>
</dbReference>
<dbReference type="GO" id="GO:0006412">
    <property type="term" value="P:translation"/>
    <property type="evidence" value="ECO:0007669"/>
    <property type="project" value="UniProtKB-UniRule"/>
</dbReference>
<dbReference type="CDD" id="cd00387">
    <property type="entry name" value="Ribosomal_L7_L12"/>
    <property type="match status" value="1"/>
</dbReference>
<dbReference type="FunFam" id="3.30.1390.10:FF:000001">
    <property type="entry name" value="50S ribosomal protein L7/L12"/>
    <property type="match status" value="1"/>
</dbReference>
<dbReference type="Gene3D" id="3.30.1390.10">
    <property type="match status" value="1"/>
</dbReference>
<dbReference type="Gene3D" id="1.20.5.710">
    <property type="entry name" value="Single helix bin"/>
    <property type="match status" value="1"/>
</dbReference>
<dbReference type="HAMAP" id="MF_00368">
    <property type="entry name" value="Ribosomal_bL12"/>
    <property type="match status" value="1"/>
</dbReference>
<dbReference type="InterPro" id="IPR000206">
    <property type="entry name" value="Ribosomal_bL12"/>
</dbReference>
<dbReference type="InterPro" id="IPR013823">
    <property type="entry name" value="Ribosomal_bL12_C"/>
</dbReference>
<dbReference type="InterPro" id="IPR014719">
    <property type="entry name" value="Ribosomal_bL12_C/ClpS-like"/>
</dbReference>
<dbReference type="InterPro" id="IPR008932">
    <property type="entry name" value="Ribosomal_bL12_oligo"/>
</dbReference>
<dbReference type="InterPro" id="IPR036235">
    <property type="entry name" value="Ribosomal_bL12_oligo_N_sf"/>
</dbReference>
<dbReference type="NCBIfam" id="TIGR00855">
    <property type="entry name" value="L12"/>
    <property type="match status" value="1"/>
</dbReference>
<dbReference type="PANTHER" id="PTHR45987">
    <property type="entry name" value="39S RIBOSOMAL PROTEIN L12"/>
    <property type="match status" value="1"/>
</dbReference>
<dbReference type="PANTHER" id="PTHR45987:SF4">
    <property type="entry name" value="LARGE RIBOSOMAL SUBUNIT PROTEIN BL12M"/>
    <property type="match status" value="1"/>
</dbReference>
<dbReference type="Pfam" id="PF00542">
    <property type="entry name" value="Ribosomal_L12"/>
    <property type="match status" value="1"/>
</dbReference>
<dbReference type="Pfam" id="PF16320">
    <property type="entry name" value="Ribosomal_L12_N"/>
    <property type="match status" value="1"/>
</dbReference>
<dbReference type="SUPFAM" id="SSF54736">
    <property type="entry name" value="ClpS-like"/>
    <property type="match status" value="1"/>
</dbReference>
<dbReference type="SUPFAM" id="SSF48300">
    <property type="entry name" value="Ribosomal protein L7/12, oligomerisation (N-terminal) domain"/>
    <property type="match status" value="1"/>
</dbReference>
<comment type="function">
    <text evidence="1">Forms part of the ribosomal stalk which helps the ribosome interact with GTP-bound translation factors. Is thus essential for accurate translation.</text>
</comment>
<comment type="subunit">
    <text evidence="1">Homodimer. Part of the ribosomal stalk of the 50S ribosomal subunit. Forms a multimeric L10(L12)X complex, where L10 forms an elongated spine to which 2 to 4 L12 dimers bind in a sequential fashion. Binds GTP-bound translation factors.</text>
</comment>
<comment type="similarity">
    <text evidence="1">Belongs to the bacterial ribosomal protein bL12 family.</text>
</comment>
<protein>
    <recommendedName>
        <fullName evidence="1">Large ribosomal subunit protein bL12</fullName>
    </recommendedName>
    <alternativeName>
        <fullName evidence="3">50S ribosomal protein L7/L12</fullName>
    </alternativeName>
</protein>
<name>RL7_CYAP4</name>
<organism>
    <name type="scientific">Cyanothece sp. (strain PCC 7425 / ATCC 29141)</name>
    <dbReference type="NCBI Taxonomy" id="395961"/>
    <lineage>
        <taxon>Bacteria</taxon>
        <taxon>Bacillati</taxon>
        <taxon>Cyanobacteriota</taxon>
        <taxon>Cyanophyceae</taxon>
        <taxon>Gomontiellales</taxon>
        <taxon>Cyanothecaceae</taxon>
        <taxon>Cyanothece</taxon>
    </lineage>
</organism>
<feature type="chain" id="PRO_1000195788" description="Large ribosomal subunit protein bL12">
    <location>
        <begin position="1"/>
        <end position="131"/>
    </location>
</feature>
<feature type="region of interest" description="Disordered" evidence="2">
    <location>
        <begin position="100"/>
        <end position="131"/>
    </location>
</feature>
<feature type="compositionally biased region" description="Basic and acidic residues" evidence="2">
    <location>
        <begin position="100"/>
        <end position="125"/>
    </location>
</feature>
<sequence>MSAATDEILEKLKTLTLLEAAELVKQIEEAFGVSAAAPAGGMVMMAPGAGAAAPAEEVEEKTAFDVVLDDVPADKKIAVLKIVRELTGLGLKEAKEVVESTPKPIKEGISKEDAEAAKKQLEDAGGKVSIK</sequence>
<proteinExistence type="inferred from homology"/>
<gene>
    <name evidence="1" type="primary">rplL</name>
    <name evidence="1" type="synonym">rpl12</name>
    <name type="ordered locus">Cyan7425_4010</name>
</gene>
<accession>B8HVL2</accession>
<keyword id="KW-0687">Ribonucleoprotein</keyword>
<keyword id="KW-0689">Ribosomal protein</keyword>
<evidence type="ECO:0000255" key="1">
    <source>
        <dbReference type="HAMAP-Rule" id="MF_00368"/>
    </source>
</evidence>
<evidence type="ECO:0000256" key="2">
    <source>
        <dbReference type="SAM" id="MobiDB-lite"/>
    </source>
</evidence>
<evidence type="ECO:0000305" key="3"/>
<reference key="1">
    <citation type="journal article" date="2011" name="MBio">
        <title>Novel metabolic attributes of the genus Cyanothece, comprising a group of unicellular nitrogen-fixing Cyanobacteria.</title>
        <authorList>
            <person name="Bandyopadhyay A."/>
            <person name="Elvitigala T."/>
            <person name="Welsh E."/>
            <person name="Stockel J."/>
            <person name="Liberton M."/>
            <person name="Min H."/>
            <person name="Sherman L.A."/>
            <person name="Pakrasi H.B."/>
        </authorList>
    </citation>
    <scope>NUCLEOTIDE SEQUENCE [LARGE SCALE GENOMIC DNA]</scope>
    <source>
        <strain>PCC 7425 / ATCC 29141</strain>
    </source>
</reference>